<evidence type="ECO:0000255" key="1">
    <source>
        <dbReference type="HAMAP-Rule" id="MF_01463"/>
    </source>
</evidence>
<evidence type="ECO:0000305" key="2"/>
<accession>Q9ZFF8</accession>
<accession>Q57SF6</accession>
<feature type="chain" id="PRO_0000095969" description="Protein translocase subunit SecD">
    <location>
        <begin position="1"/>
        <end position="615"/>
    </location>
</feature>
<feature type="transmembrane region" description="Helical" evidence="1">
    <location>
        <begin position="10"/>
        <end position="30"/>
    </location>
</feature>
<feature type="transmembrane region" description="Helical" evidence="1">
    <location>
        <begin position="452"/>
        <end position="472"/>
    </location>
</feature>
<feature type="transmembrane region" description="Helical" evidence="1">
    <location>
        <begin position="477"/>
        <end position="497"/>
    </location>
</feature>
<feature type="transmembrane region" description="Helical" evidence="1">
    <location>
        <begin position="504"/>
        <end position="524"/>
    </location>
</feature>
<feature type="transmembrane region" description="Helical" evidence="1">
    <location>
        <begin position="546"/>
        <end position="568"/>
    </location>
</feature>
<feature type="transmembrane region" description="Helical" evidence="1">
    <location>
        <begin position="585"/>
        <end position="605"/>
    </location>
</feature>
<feature type="sequence conflict" description="In Ref. 1; AAC83834." evidence="2" ref="1">
    <original>T</original>
    <variation>K</variation>
    <location>
        <position position="611"/>
    </location>
</feature>
<keyword id="KW-0997">Cell inner membrane</keyword>
<keyword id="KW-1003">Cell membrane</keyword>
<keyword id="KW-0472">Membrane</keyword>
<keyword id="KW-0653">Protein transport</keyword>
<keyword id="KW-0811">Translocation</keyword>
<keyword id="KW-0812">Transmembrane</keyword>
<keyword id="KW-1133">Transmembrane helix</keyword>
<keyword id="KW-0813">Transport</keyword>
<proteinExistence type="inferred from homology"/>
<protein>
    <recommendedName>
        <fullName evidence="1">Protein translocase subunit SecD</fullName>
    </recommendedName>
</protein>
<dbReference type="EMBL" id="AF100611">
    <property type="protein sequence ID" value="AAC83834.1"/>
    <property type="molecule type" value="Genomic_DNA"/>
</dbReference>
<dbReference type="EMBL" id="AE017220">
    <property type="protein sequence ID" value="AAX64355.1"/>
    <property type="molecule type" value="Genomic_DNA"/>
</dbReference>
<dbReference type="RefSeq" id="WP_000934811.1">
    <property type="nucleotide sequence ID" value="NC_006905.1"/>
</dbReference>
<dbReference type="SMR" id="Q9ZFF8"/>
<dbReference type="KEGG" id="sec:SCH_0449"/>
<dbReference type="HOGENOM" id="CLU_007894_4_3_6"/>
<dbReference type="Proteomes" id="UP000000538">
    <property type="component" value="Chromosome"/>
</dbReference>
<dbReference type="GO" id="GO:0005886">
    <property type="term" value="C:plasma membrane"/>
    <property type="evidence" value="ECO:0007669"/>
    <property type="project" value="UniProtKB-SubCell"/>
</dbReference>
<dbReference type="GO" id="GO:0015450">
    <property type="term" value="F:protein-transporting ATPase activity"/>
    <property type="evidence" value="ECO:0007669"/>
    <property type="project" value="InterPro"/>
</dbReference>
<dbReference type="GO" id="GO:0065002">
    <property type="term" value="P:intracellular protein transmembrane transport"/>
    <property type="evidence" value="ECO:0007669"/>
    <property type="project" value="UniProtKB-UniRule"/>
</dbReference>
<dbReference type="GO" id="GO:0006605">
    <property type="term" value="P:protein targeting"/>
    <property type="evidence" value="ECO:0007669"/>
    <property type="project" value="UniProtKB-UniRule"/>
</dbReference>
<dbReference type="GO" id="GO:0043952">
    <property type="term" value="P:protein transport by the Sec complex"/>
    <property type="evidence" value="ECO:0007669"/>
    <property type="project" value="UniProtKB-UniRule"/>
</dbReference>
<dbReference type="FunFam" id="1.20.1640.10:FF:000004">
    <property type="entry name" value="Protein translocase subunit SecD"/>
    <property type="match status" value="1"/>
</dbReference>
<dbReference type="FunFam" id="3.30.1360.200:FF:000001">
    <property type="entry name" value="Protein translocase subunit SecD"/>
    <property type="match status" value="1"/>
</dbReference>
<dbReference type="FunFam" id="3.30.70.3400:FF:000001">
    <property type="entry name" value="Protein translocase subunit SecD"/>
    <property type="match status" value="1"/>
</dbReference>
<dbReference type="Gene3D" id="3.30.1360.200">
    <property type="match status" value="1"/>
</dbReference>
<dbReference type="Gene3D" id="3.30.70.260">
    <property type="match status" value="1"/>
</dbReference>
<dbReference type="Gene3D" id="3.30.70.3400">
    <property type="match status" value="2"/>
</dbReference>
<dbReference type="Gene3D" id="1.20.1640.10">
    <property type="entry name" value="Multidrug efflux transporter AcrB transmembrane domain"/>
    <property type="match status" value="1"/>
</dbReference>
<dbReference type="HAMAP" id="MF_01463_B">
    <property type="entry name" value="SecD_B"/>
    <property type="match status" value="1"/>
</dbReference>
<dbReference type="InterPro" id="IPR005791">
    <property type="entry name" value="SecD"/>
</dbReference>
<dbReference type="InterPro" id="IPR027398">
    <property type="entry name" value="SecD-TM"/>
</dbReference>
<dbReference type="InterPro" id="IPR022813">
    <property type="entry name" value="SecD/SecF_arch_bac"/>
</dbReference>
<dbReference type="InterPro" id="IPR022646">
    <property type="entry name" value="SecD/SecF_CS"/>
</dbReference>
<dbReference type="InterPro" id="IPR048631">
    <property type="entry name" value="SecD_1st"/>
</dbReference>
<dbReference type="InterPro" id="IPR048634">
    <property type="entry name" value="SecD_SecF_C"/>
</dbReference>
<dbReference type="InterPro" id="IPR055344">
    <property type="entry name" value="SecD_SecF_C_bact"/>
</dbReference>
<dbReference type="InterPro" id="IPR054384">
    <property type="entry name" value="SecDF_P1_head"/>
</dbReference>
<dbReference type="NCBIfam" id="TIGR00916">
    <property type="entry name" value="2A0604s01"/>
    <property type="match status" value="1"/>
</dbReference>
<dbReference type="NCBIfam" id="TIGR01129">
    <property type="entry name" value="secD"/>
    <property type="match status" value="1"/>
</dbReference>
<dbReference type="PANTHER" id="PTHR30081:SF1">
    <property type="entry name" value="PROTEIN TRANSLOCASE SUBUNIT SECD"/>
    <property type="match status" value="1"/>
</dbReference>
<dbReference type="PANTHER" id="PTHR30081">
    <property type="entry name" value="PROTEIN-EXPORT MEMBRANE PROTEIN SEC"/>
    <property type="match status" value="1"/>
</dbReference>
<dbReference type="Pfam" id="PF07549">
    <property type="entry name" value="Sec_GG"/>
    <property type="match status" value="1"/>
</dbReference>
<dbReference type="Pfam" id="PF13721">
    <property type="entry name" value="SecD-TM1"/>
    <property type="match status" value="1"/>
</dbReference>
<dbReference type="Pfam" id="PF21760">
    <property type="entry name" value="SecD_1st"/>
    <property type="match status" value="1"/>
</dbReference>
<dbReference type="Pfam" id="PF02355">
    <property type="entry name" value="SecD_SecF_C"/>
    <property type="match status" value="1"/>
</dbReference>
<dbReference type="Pfam" id="PF22599">
    <property type="entry name" value="SecDF_P1_head"/>
    <property type="match status" value="1"/>
</dbReference>
<dbReference type="SUPFAM" id="SSF82866">
    <property type="entry name" value="Multidrug efflux transporter AcrB transmembrane domain"/>
    <property type="match status" value="1"/>
</dbReference>
<organism>
    <name type="scientific">Salmonella choleraesuis (strain SC-B67)</name>
    <dbReference type="NCBI Taxonomy" id="321314"/>
    <lineage>
        <taxon>Bacteria</taxon>
        <taxon>Pseudomonadati</taxon>
        <taxon>Pseudomonadota</taxon>
        <taxon>Gammaproteobacteria</taxon>
        <taxon>Enterobacterales</taxon>
        <taxon>Enterobacteriaceae</taxon>
        <taxon>Salmonella</taxon>
    </lineage>
</organism>
<sequence>MLNRYPLWKYIMLVVVIIVGLLYALPNLYGEDPAVQITGVRGVAASEQTLIQVQKTLQEEKIPAKSVALEEGAILARFDTTDTQLRAREALMSVLGDKYVVALNLAPATPRWLAAIHADPMKLGLDLRGGVHFLMEVDMDTALGKLQEQNIDSLRSDLREKGIPYTTVRKENNYGLSITFRDSKARDEAIAYLTPRHRDLVISSQSGNQLRAVMTDARLSEAREYAVQQNINILRNRVNQLGVAEPVVQRQGADRIVVELPGIQDTARAKEILGATATLEFRLVNTNVDQAAAAAGRVPGDSEVKQTREGQPVVLYKRVILTGDHITDSTSSQDEYNQPQVNISLDSAGGNIMSNFTKDNIGKPMATLFVEYKDSGKKDANGRAVLVKQEEVINIANIQSRLGNSFRITGISNPNEARQLSLLLRAGALIAPIQIVEERTIGPTLGMQNIKQGLEACLAGLVVSILFMIFFYKKFGLIATSALVANLVLIVGIMSLLPGATLSMPGIAGIVLTLAVAVDANVLINERIKEELSNGRTVQQAINEGYAGAFSSIFDANITTLIKVIILYAVGTGAIKGFAITTGIGVATSMFTAIIGTRAIVNLLYGGKRVTKLSI</sequence>
<comment type="function">
    <text evidence="1">Part of the Sec protein translocase complex. Interacts with the SecYEG preprotein conducting channel. SecDF uses the proton motive force (PMF) to complete protein translocation after the ATP-dependent function of SecA.</text>
</comment>
<comment type="subunit">
    <text evidence="1">Forms a complex with SecF. Part of the essential Sec protein translocation apparatus which comprises SecA, SecYEG and auxiliary proteins SecDF-YajC and YidC.</text>
</comment>
<comment type="subcellular location">
    <subcellularLocation>
        <location>Cell inner membrane</location>
        <topology>Multi-pass membrane protein</topology>
    </subcellularLocation>
</comment>
<comment type="similarity">
    <text evidence="1">Belongs to the SecD/SecF family. SecD subfamily.</text>
</comment>
<name>SECD_SALCH</name>
<gene>
    <name evidence="1" type="primary">secD</name>
    <name type="ordered locus">SCH_0449</name>
</gene>
<reference key="1">
    <citation type="submission" date="1998-10" db="EMBL/GenBank/DDBJ databases">
        <title>Identification of secD gene from Salmonella choleraesuis.</title>
        <authorList>
            <person name="Kuhn F.C."/>
            <person name="Gies A.J."/>
            <person name="Smeltzer M."/>
            <person name="Crupper S.S."/>
            <person name="Sobieski R.J."/>
        </authorList>
    </citation>
    <scope>NUCLEOTIDE SEQUENCE [GENOMIC DNA]</scope>
</reference>
<reference key="2">
    <citation type="journal article" date="2005" name="Nucleic Acids Res.">
        <title>The genome sequence of Salmonella enterica serovar Choleraesuis, a highly invasive and resistant zoonotic pathogen.</title>
        <authorList>
            <person name="Chiu C.-H."/>
            <person name="Tang P."/>
            <person name="Chu C."/>
            <person name="Hu S."/>
            <person name="Bao Q."/>
            <person name="Yu J."/>
            <person name="Chou Y.-Y."/>
            <person name="Wang H.-S."/>
            <person name="Lee Y.-S."/>
        </authorList>
    </citation>
    <scope>NUCLEOTIDE SEQUENCE [LARGE SCALE GENOMIC DNA]</scope>
    <source>
        <strain>SC-B67</strain>
    </source>
</reference>